<protein>
    <recommendedName>
        <fullName evidence="2">Ribosome biogenesis protein ERB1</fullName>
    </recommendedName>
    <alternativeName>
        <fullName evidence="2">Eukaryotic ribosome biogenesis protein 1</fullName>
    </alternativeName>
</protein>
<proteinExistence type="inferred from homology"/>
<gene>
    <name evidence="2" type="primary">ERB1</name>
    <name type="ordered locus">KLLA0F26653g</name>
</gene>
<evidence type="ECO:0000250" key="1"/>
<evidence type="ECO:0000255" key="2">
    <source>
        <dbReference type="HAMAP-Rule" id="MF_03027"/>
    </source>
</evidence>
<evidence type="ECO:0000256" key="3">
    <source>
        <dbReference type="SAM" id="MobiDB-lite"/>
    </source>
</evidence>
<accession>Q6CIH3</accession>
<name>ERB1_KLULA</name>
<keyword id="KW-0539">Nucleus</keyword>
<keyword id="KW-1185">Reference proteome</keyword>
<keyword id="KW-0677">Repeat</keyword>
<keyword id="KW-0690">Ribosome biogenesis</keyword>
<keyword id="KW-0698">rRNA processing</keyword>
<keyword id="KW-0853">WD repeat</keyword>
<organism>
    <name type="scientific">Kluyveromyces lactis (strain ATCC 8585 / CBS 2359 / DSM 70799 / NBRC 1267 / NRRL Y-1140 / WM37)</name>
    <name type="common">Yeast</name>
    <name type="synonym">Candida sphaerica</name>
    <dbReference type="NCBI Taxonomy" id="284590"/>
    <lineage>
        <taxon>Eukaryota</taxon>
        <taxon>Fungi</taxon>
        <taxon>Dikarya</taxon>
        <taxon>Ascomycota</taxon>
        <taxon>Saccharomycotina</taxon>
        <taxon>Saccharomycetes</taxon>
        <taxon>Saccharomycetales</taxon>
        <taxon>Saccharomycetaceae</taxon>
        <taxon>Kluyveromyces</taxon>
    </lineage>
</organism>
<sequence length="791" mass="89794">MARKNSSLNGSESAELVVKKRVLEESELSDSEDERIEVDGLIDEEASENEAEEAEDDDSDAEFNRLLAEEENGQEEEYNTSDFSEEGDAFSITDKLSNVKLTVIPETSDEGIVRTKYSDGRPRILKSEINPVYDSDDSDAEAKNTIGNIPLSAYDEMPHIGYDINGKRIMRPAKGSALDQLLESIELPEGWTGLLDKDSGASLNLTEEELELINKLQNNQQTDESVNPYEPLIDWFTRHESVMPVTAVPEPKRRFVPSKHEAKRVMKIVKAIREGRIIPPKKLKELREKEEQDSHNYDLWGDAEEISEHVMNLRAPKLPPPTNEESYNPPEEYLLTPEEIDAWEKMEPSERERNFVPHKFAALRKVPGYSESVRERFERSLDLYLAPRVRKNKLNIDPESLIPELPSTKDLRPFPIRCSTVYVGHKGKIRTMSIDPTGLWLATGSDDGTVRVWEILTGREVYQVTILNAEENNDDHIDVVEWNPDSTTGILAVTAGENIFLLVPPIFGFEIENTGKSKIEYGFGFDTFGNVKKSNLNVNSDDEDDGAESHAVKKQVAQWNKPTERQAANDICIVITCRKSVKKLSWHRKGDYFVTVQPDSGNTSVLIHQLSKHLTQSPFKKSKGIIMDAKFHPFKPQLLVCSQRYVRIYDLSQQVLIKKLLPGARWLSTIDIHPRGDNLIASSFDKRVLWHDLDLASTPYKTLRYHEKAVRSVSFHKKLPLFCSAADDGNIHVFHATVYDDLMKNPMIVPLKKLTGHKIVNSLGVLDTIWHPREAWLFSAGADKTARLWTT</sequence>
<reference key="1">
    <citation type="journal article" date="2004" name="Nature">
        <title>Genome evolution in yeasts.</title>
        <authorList>
            <person name="Dujon B."/>
            <person name="Sherman D."/>
            <person name="Fischer G."/>
            <person name="Durrens P."/>
            <person name="Casaregola S."/>
            <person name="Lafontaine I."/>
            <person name="de Montigny J."/>
            <person name="Marck C."/>
            <person name="Neuveglise C."/>
            <person name="Talla E."/>
            <person name="Goffard N."/>
            <person name="Frangeul L."/>
            <person name="Aigle M."/>
            <person name="Anthouard V."/>
            <person name="Babour A."/>
            <person name="Barbe V."/>
            <person name="Barnay S."/>
            <person name="Blanchin S."/>
            <person name="Beckerich J.-M."/>
            <person name="Beyne E."/>
            <person name="Bleykasten C."/>
            <person name="Boisrame A."/>
            <person name="Boyer J."/>
            <person name="Cattolico L."/>
            <person name="Confanioleri F."/>
            <person name="de Daruvar A."/>
            <person name="Despons L."/>
            <person name="Fabre E."/>
            <person name="Fairhead C."/>
            <person name="Ferry-Dumazet H."/>
            <person name="Groppi A."/>
            <person name="Hantraye F."/>
            <person name="Hennequin C."/>
            <person name="Jauniaux N."/>
            <person name="Joyet P."/>
            <person name="Kachouri R."/>
            <person name="Kerrest A."/>
            <person name="Koszul R."/>
            <person name="Lemaire M."/>
            <person name="Lesur I."/>
            <person name="Ma L."/>
            <person name="Muller H."/>
            <person name="Nicaud J.-M."/>
            <person name="Nikolski M."/>
            <person name="Oztas S."/>
            <person name="Ozier-Kalogeropoulos O."/>
            <person name="Pellenz S."/>
            <person name="Potier S."/>
            <person name="Richard G.-F."/>
            <person name="Straub M.-L."/>
            <person name="Suleau A."/>
            <person name="Swennen D."/>
            <person name="Tekaia F."/>
            <person name="Wesolowski-Louvel M."/>
            <person name="Westhof E."/>
            <person name="Wirth B."/>
            <person name="Zeniou-Meyer M."/>
            <person name="Zivanovic Y."/>
            <person name="Bolotin-Fukuhara M."/>
            <person name="Thierry A."/>
            <person name="Bouchier C."/>
            <person name="Caudron B."/>
            <person name="Scarpelli C."/>
            <person name="Gaillardin C."/>
            <person name="Weissenbach J."/>
            <person name="Wincker P."/>
            <person name="Souciet J.-L."/>
        </authorList>
    </citation>
    <scope>NUCLEOTIDE SEQUENCE [LARGE SCALE GENOMIC DNA]</scope>
    <source>
        <strain>ATCC 8585 / CBS 2359 / DSM 70799 / NBRC 1267 / NRRL Y-1140 / WM37</strain>
    </source>
</reference>
<dbReference type="EMBL" id="CR382126">
    <property type="protein sequence ID" value="CAG98974.1"/>
    <property type="molecule type" value="Genomic_DNA"/>
</dbReference>
<dbReference type="RefSeq" id="XP_456266.1">
    <property type="nucleotide sequence ID" value="XM_456266.1"/>
</dbReference>
<dbReference type="SMR" id="Q6CIH3"/>
<dbReference type="FunCoup" id="Q6CIH3">
    <property type="interactions" value="1142"/>
</dbReference>
<dbReference type="STRING" id="284590.Q6CIH3"/>
<dbReference type="PaxDb" id="284590-Q6CIH3"/>
<dbReference type="KEGG" id="kla:KLLA0_F26653g"/>
<dbReference type="eggNOG" id="KOG0650">
    <property type="taxonomic scope" value="Eukaryota"/>
</dbReference>
<dbReference type="HOGENOM" id="CLU_011390_0_1_1"/>
<dbReference type="InParanoid" id="Q6CIH3"/>
<dbReference type="OMA" id="MRPAKGE"/>
<dbReference type="Proteomes" id="UP000000598">
    <property type="component" value="Chromosome F"/>
</dbReference>
<dbReference type="GO" id="GO:0005654">
    <property type="term" value="C:nucleoplasm"/>
    <property type="evidence" value="ECO:0007669"/>
    <property type="project" value="UniProtKB-SubCell"/>
</dbReference>
<dbReference type="GO" id="GO:0070545">
    <property type="term" value="C:PeBoW complex"/>
    <property type="evidence" value="ECO:0007669"/>
    <property type="project" value="TreeGrafter"/>
</dbReference>
<dbReference type="GO" id="GO:0030687">
    <property type="term" value="C:preribosome, large subunit precursor"/>
    <property type="evidence" value="ECO:0007669"/>
    <property type="project" value="UniProtKB-UniRule"/>
</dbReference>
<dbReference type="GO" id="GO:0043021">
    <property type="term" value="F:ribonucleoprotein complex binding"/>
    <property type="evidence" value="ECO:0007669"/>
    <property type="project" value="UniProtKB-UniRule"/>
</dbReference>
<dbReference type="GO" id="GO:0000466">
    <property type="term" value="P:maturation of 5.8S rRNA from tricistronic rRNA transcript (SSU-rRNA, 5.8S rRNA, LSU-rRNA)"/>
    <property type="evidence" value="ECO:0007669"/>
    <property type="project" value="UniProtKB-UniRule"/>
</dbReference>
<dbReference type="GO" id="GO:0000463">
    <property type="term" value="P:maturation of LSU-rRNA from tricistronic rRNA transcript (SSU-rRNA, 5.8S rRNA, LSU-rRNA)"/>
    <property type="evidence" value="ECO:0007669"/>
    <property type="project" value="UniProtKB-UniRule"/>
</dbReference>
<dbReference type="FunFam" id="2.130.10.10:FF:000061">
    <property type="entry name" value="Ribosome biogenesis protein BOP1 homolog"/>
    <property type="match status" value="1"/>
</dbReference>
<dbReference type="Gene3D" id="2.130.10.10">
    <property type="entry name" value="YVTN repeat-like/Quinoprotein amine dehydrogenase"/>
    <property type="match status" value="1"/>
</dbReference>
<dbReference type="HAMAP" id="MF_03027">
    <property type="entry name" value="BOP1"/>
    <property type="match status" value="1"/>
</dbReference>
<dbReference type="InterPro" id="IPR028598">
    <property type="entry name" value="BOP1/Erb1"/>
</dbReference>
<dbReference type="InterPro" id="IPR012953">
    <property type="entry name" value="BOP1_N_dom"/>
</dbReference>
<dbReference type="InterPro" id="IPR015943">
    <property type="entry name" value="WD40/YVTN_repeat-like_dom_sf"/>
</dbReference>
<dbReference type="InterPro" id="IPR019775">
    <property type="entry name" value="WD40_repeat_CS"/>
</dbReference>
<dbReference type="InterPro" id="IPR036322">
    <property type="entry name" value="WD40_repeat_dom_sf"/>
</dbReference>
<dbReference type="InterPro" id="IPR001680">
    <property type="entry name" value="WD40_rpt"/>
</dbReference>
<dbReference type="PANTHER" id="PTHR17605:SF0">
    <property type="entry name" value="RIBOSOME BIOGENESIS PROTEIN BOP1"/>
    <property type="match status" value="1"/>
</dbReference>
<dbReference type="PANTHER" id="PTHR17605">
    <property type="entry name" value="RIBOSOME BIOGENESIS PROTEIN BOP1 BLOCK OF PROLIFERATION 1 PROTEIN"/>
    <property type="match status" value="1"/>
</dbReference>
<dbReference type="Pfam" id="PF08145">
    <property type="entry name" value="BOP1NT"/>
    <property type="match status" value="1"/>
</dbReference>
<dbReference type="Pfam" id="PF00400">
    <property type="entry name" value="WD40"/>
    <property type="match status" value="3"/>
</dbReference>
<dbReference type="SMART" id="SM01035">
    <property type="entry name" value="BOP1NT"/>
    <property type="match status" value="1"/>
</dbReference>
<dbReference type="SMART" id="SM00320">
    <property type="entry name" value="WD40"/>
    <property type="match status" value="5"/>
</dbReference>
<dbReference type="SUPFAM" id="SSF50978">
    <property type="entry name" value="WD40 repeat-like"/>
    <property type="match status" value="1"/>
</dbReference>
<dbReference type="PROSITE" id="PS00678">
    <property type="entry name" value="WD_REPEATS_1"/>
    <property type="match status" value="1"/>
</dbReference>
<dbReference type="PROSITE" id="PS50082">
    <property type="entry name" value="WD_REPEATS_2"/>
    <property type="match status" value="2"/>
</dbReference>
<dbReference type="PROSITE" id="PS50294">
    <property type="entry name" value="WD_REPEATS_REGION"/>
    <property type="match status" value="2"/>
</dbReference>
<feature type="chain" id="PRO_0000370431" description="Ribosome biogenesis protein ERB1">
    <location>
        <begin position="1"/>
        <end position="791"/>
    </location>
</feature>
<feature type="repeat" description="WD 1">
    <location>
        <begin position="424"/>
        <end position="463"/>
    </location>
</feature>
<feature type="repeat" description="WD 2">
    <location>
        <begin position="472"/>
        <end position="512"/>
    </location>
</feature>
<feature type="repeat" description="WD 3">
    <location>
        <begin position="576"/>
        <end position="618"/>
    </location>
</feature>
<feature type="repeat" description="WD 4">
    <location>
        <begin position="621"/>
        <end position="659"/>
    </location>
</feature>
<feature type="repeat" description="WD 5">
    <location>
        <begin position="662"/>
        <end position="701"/>
    </location>
</feature>
<feature type="repeat" description="WD 6">
    <location>
        <begin position="705"/>
        <end position="744"/>
    </location>
</feature>
<feature type="repeat" description="WD 7">
    <location>
        <begin position="760"/>
        <end position="791"/>
    </location>
</feature>
<feature type="region of interest" description="Disordered" evidence="3">
    <location>
        <begin position="1"/>
        <end position="60"/>
    </location>
</feature>
<feature type="region of interest" description="Disordered" evidence="3">
    <location>
        <begin position="68"/>
        <end position="87"/>
    </location>
</feature>
<feature type="region of interest" description="Required for interaction with NOP7" evidence="1">
    <location>
        <begin position="254"/>
        <end position="372"/>
    </location>
</feature>
<feature type="region of interest" description="Required for interaction with YTM1" evidence="1">
    <location>
        <begin position="372"/>
        <end position="408"/>
    </location>
</feature>
<feature type="compositionally biased region" description="Polar residues" evidence="3">
    <location>
        <begin position="1"/>
        <end position="12"/>
    </location>
</feature>
<feature type="compositionally biased region" description="Acidic residues" evidence="3">
    <location>
        <begin position="25"/>
        <end position="60"/>
    </location>
</feature>
<feature type="compositionally biased region" description="Acidic residues" evidence="3">
    <location>
        <begin position="69"/>
        <end position="87"/>
    </location>
</feature>
<comment type="function">
    <text evidence="2">Component of the NOP7 complex, which is required for maturation of the 25S and 5.8S ribosomal RNAs and formation of the 60S ribosome.</text>
</comment>
<comment type="subunit">
    <text evidence="2">Component of the NOP7 complex, composed of ERB1, NOP7 and YTM1. The complex is held together by ERB1, which interacts with NOP7 via its N-terminal domain and with YTM1 via a high-affinity interaction between the seven-bladed beta-propeller domains of the 2 proteins. The NOP7 complex associates with the 66S pre-ribosome.</text>
</comment>
<comment type="subcellular location">
    <subcellularLocation>
        <location evidence="2">Nucleus</location>
        <location evidence="2">Nucleolus</location>
    </subcellularLocation>
    <subcellularLocation>
        <location evidence="2">Nucleus</location>
        <location evidence="2">Nucleoplasm</location>
    </subcellularLocation>
</comment>
<comment type="similarity">
    <text evidence="2">Belongs to the WD repeat BOP1/ERB1 family.</text>
</comment>